<organism>
    <name type="scientific">Homo sapiens</name>
    <name type="common">Human</name>
    <dbReference type="NCBI Taxonomy" id="9606"/>
    <lineage>
        <taxon>Eukaryota</taxon>
        <taxon>Metazoa</taxon>
        <taxon>Chordata</taxon>
        <taxon>Craniata</taxon>
        <taxon>Vertebrata</taxon>
        <taxon>Euteleostomi</taxon>
        <taxon>Mammalia</taxon>
        <taxon>Eutheria</taxon>
        <taxon>Euarchontoglires</taxon>
        <taxon>Primates</taxon>
        <taxon>Haplorrhini</taxon>
        <taxon>Catarrhini</taxon>
        <taxon>Hominidae</taxon>
        <taxon>Homo</taxon>
    </lineage>
</organism>
<keyword id="KW-1267">Proteomics identification</keyword>
<keyword id="KW-1185">Reference proteome</keyword>
<sequence length="743" mass="82340">MLSRLGALLQEAVGAREPSIDLLQAFVEHWKGITHYYIESTDESTPAKKTDIPWRLKQMLDILVYEEQQQAAAGEAGPCLEYLLQHKILETLCTLGKAEYPPGMRQQVFQFFSKVLAQVQHPLLHYLSVHRPVQKLLRLGGTASGSVTEKEEVQFTTVLCSKIQQDPELLAYILEGKKIVGRKKACGEPTALPKDTTSHGDKDCSHDGAPARPQLDGESCGAQALNSHMPAETEELDGGTTESNLITSLLGLCQSKKSRVALKAQENLLLLVSMASPAAATYLVQSSACCPAIVRHLCQLYRSMPVFLDPADIATLEGISWRLPSAPSDEASFPGKEALAAFLGWFDYCDHLITEAHTVVADALAKAVAENFFVETLQPQLLHVSEQSILTSTALLTAMLRQLRSPALLREAVAFLLGTDRQPEAPGDNPHTLYAHLIGHCDHLSDEISITTLRLFEELLQKPHEGIIHSLVLRNLEGRPYVAWGSPEPESYEDTLDLEEDPYFTDSFLDSGFQTPAKPRLAPATSYDGKTAVTEIVNSFLCLVPEEAKTSAFLEETGYDTYVHDAYGLFQECSSRVASWGWPLTPTPLDPHEPERPFFEGHFLRVLFDRMSRILDQPYSLNLQVTSVLSRLALFPHPHIHEYLLDPYISLAPGCRSLFSVLVRVIGDLMQRIQRVPQFPGKLLLVRKQLTGQAPGEQLDHQTLLQGVVVLEEFCKELAAIAFVKFPPHDPRQNVSPAPEGQV</sequence>
<name>FHI2B_HUMAN</name>
<evidence type="ECO:0000250" key="1">
    <source>
        <dbReference type="UniProtKB" id="Q80YR2"/>
    </source>
</evidence>
<evidence type="ECO:0000256" key="2">
    <source>
        <dbReference type="SAM" id="MobiDB-lite"/>
    </source>
</evidence>
<evidence type="ECO:0000269" key="3">
    <source>
    </source>
</evidence>
<evidence type="ECO:0000269" key="4">
    <source>
    </source>
</evidence>
<evidence type="ECO:0000269" key="5">
    <source>
    </source>
</evidence>
<evidence type="ECO:0000303" key="6">
    <source>
    </source>
</evidence>
<evidence type="ECO:0000305" key="7"/>
<evidence type="ECO:0000312" key="8">
    <source>
        <dbReference type="HGNC" id="HGNC:16492"/>
    </source>
</evidence>
<feature type="chain" id="PRO_0000284645" description="FHF complex subunit HOOK-interacting protein 2B">
    <location>
        <begin position="1"/>
        <end position="743"/>
    </location>
</feature>
<feature type="region of interest" description="Disordered" evidence="2">
    <location>
        <begin position="186"/>
        <end position="219"/>
    </location>
</feature>
<feature type="compositionally biased region" description="Basic and acidic residues" evidence="2">
    <location>
        <begin position="196"/>
        <end position="206"/>
    </location>
</feature>
<feature type="sequence variant" id="VAR_054008" description="In dbSNP:rs35497596." evidence="3 4">
    <original>T</original>
    <variation>A</variation>
    <location>
        <position position="315"/>
    </location>
</feature>
<feature type="sequence variant" id="VAR_054009" description="In dbSNP:rs7822461.">
    <original>G</original>
    <variation>R</variation>
    <location>
        <position position="667"/>
    </location>
</feature>
<feature type="sequence conflict" description="In Ref. 3; AAQ06676." evidence="7" ref="3">
    <original>R</original>
    <variation>G</variation>
    <location>
        <position position="182"/>
    </location>
</feature>
<feature type="sequence conflict" description="In Ref. 2; AAH12865/AAH13350." evidence="7" ref="2">
    <original>L</original>
    <variation>F</variation>
    <location>
        <position position="684"/>
    </location>
</feature>
<accession>Q86V87</accession>
<accession>B2RDQ5</accession>
<accession>B3KNX1</accession>
<accession>Q2M211</accession>
<accession>Q71JB5</accession>
<accession>Q7L3J6</accession>
<accession>Q969T0</accession>
<accession>Q9H6W4</accession>
<proteinExistence type="evidence at protein level"/>
<comment type="function">
    <text evidence="1 5">Able to activate MAPK/ERK and TGFB signaling pathways (PubMed:22971576). May regulate the activity of genes involved in intestinal barrier function and immunoprotective inflammation (By similarity). May play a role in cell proliferation (PubMed:22971576).</text>
</comment>
<comment type="tissue specificity">
    <text evidence="5">Expressed in liver.</text>
</comment>
<comment type="similarity">
    <text evidence="7">Belongs to the FHIP family.</text>
</comment>
<comment type="sequence caution" evidence="7">
    <conflict type="erroneous initiation">
        <sequence resource="EMBL-CDS" id="AAH52237"/>
    </conflict>
    <text>Extended N-terminus.</text>
</comment>
<comment type="sequence caution" evidence="7">
    <conflict type="erroneous initiation">
        <sequence resource="EMBL-CDS" id="AAI12148"/>
    </conflict>
    <text>Extended N-terminus.</text>
</comment>
<comment type="sequence caution" evidence="7">
    <conflict type="frameshift">
        <sequence resource="EMBL-CDS" id="AAI12148"/>
    </conflict>
</comment>
<comment type="sequence caution" evidence="7">
    <conflict type="frameshift">
        <sequence resource="EMBL-CDS" id="AAQ06676"/>
    </conflict>
</comment>
<comment type="sequence caution" evidence="7">
    <conflict type="erroneous initiation">
        <sequence resource="EMBL-CDS" id="BAB15137"/>
    </conflict>
    <text>Truncated N-terminus.</text>
</comment>
<comment type="sequence caution" evidence="7">
    <conflict type="erroneous initiation">
        <sequence resource="EMBL-CDS" id="BAG38002"/>
    </conflict>
    <text>Truncated N-terminus.</text>
</comment>
<comment type="sequence caution" evidence="7">
    <conflict type="erroneous initiation">
        <sequence resource="EMBL-CDS" id="BAG51483"/>
    </conflict>
    <text>Truncated N-terminus.</text>
</comment>
<dbReference type="EMBL" id="AC091171">
    <property type="status" value="NOT_ANNOTATED_CDS"/>
    <property type="molecule type" value="Genomic_DNA"/>
</dbReference>
<dbReference type="EMBL" id="BC012865">
    <property type="protein sequence ID" value="AAH12865.3"/>
    <property type="molecule type" value="mRNA"/>
</dbReference>
<dbReference type="EMBL" id="BC013350">
    <property type="protein sequence ID" value="AAH13350.2"/>
    <property type="molecule type" value="mRNA"/>
</dbReference>
<dbReference type="EMBL" id="BC052237">
    <property type="protein sequence ID" value="AAH52237.1"/>
    <property type="status" value="ALT_INIT"/>
    <property type="molecule type" value="mRNA"/>
</dbReference>
<dbReference type="EMBL" id="BC112147">
    <property type="protein sequence ID" value="AAI12148.2"/>
    <property type="status" value="ALT_SEQ"/>
    <property type="molecule type" value="mRNA"/>
</dbReference>
<dbReference type="EMBL" id="AF495722">
    <property type="protein sequence ID" value="AAQ06676.1"/>
    <property type="status" value="ALT_FRAME"/>
    <property type="molecule type" value="mRNA"/>
</dbReference>
<dbReference type="EMBL" id="AK025454">
    <property type="protein sequence ID" value="BAB15137.1"/>
    <property type="status" value="ALT_INIT"/>
    <property type="molecule type" value="mRNA"/>
</dbReference>
<dbReference type="EMBL" id="AK315634">
    <property type="protein sequence ID" value="BAG38002.1"/>
    <property type="status" value="ALT_INIT"/>
    <property type="molecule type" value="mRNA"/>
</dbReference>
<dbReference type="EMBL" id="AK055191">
    <property type="protein sequence ID" value="BAG51483.1"/>
    <property type="status" value="ALT_INIT"/>
    <property type="molecule type" value="mRNA"/>
</dbReference>
<dbReference type="CCDS" id="CCDS6021.2"/>
<dbReference type="RefSeq" id="NP_073586.5">
    <property type="nucleotide sequence ID" value="NM_022749.5"/>
</dbReference>
<dbReference type="SMR" id="Q86V87"/>
<dbReference type="BioGRID" id="122273">
    <property type="interactions" value="38"/>
</dbReference>
<dbReference type="FunCoup" id="Q86V87">
    <property type="interactions" value="120"/>
</dbReference>
<dbReference type="IntAct" id="Q86V87">
    <property type="interactions" value="263"/>
</dbReference>
<dbReference type="STRING" id="9606.ENSP00000289921"/>
<dbReference type="iPTMnet" id="Q86V87"/>
<dbReference type="PhosphoSitePlus" id="Q86V87"/>
<dbReference type="BioMuta" id="FAM160B2"/>
<dbReference type="DMDM" id="145566932"/>
<dbReference type="jPOST" id="Q86V87"/>
<dbReference type="MassIVE" id="Q86V87"/>
<dbReference type="PaxDb" id="9606-ENSP00000289921"/>
<dbReference type="PeptideAtlas" id="Q86V87"/>
<dbReference type="ProteomicsDB" id="69977"/>
<dbReference type="Pumba" id="Q86V87"/>
<dbReference type="Antibodypedia" id="9275">
    <property type="antibodies" value="103 antibodies from 23 providers"/>
</dbReference>
<dbReference type="DNASU" id="64760"/>
<dbReference type="Ensembl" id="ENST00000289921.8">
    <property type="protein sequence ID" value="ENSP00000289921.6"/>
    <property type="gene ID" value="ENSG00000158863.22"/>
</dbReference>
<dbReference type="Ensembl" id="ENST00000450006.7">
    <property type="protein sequence ID" value="ENSP00000403288.3"/>
    <property type="gene ID" value="ENSG00000158863.22"/>
</dbReference>
<dbReference type="GeneID" id="64760"/>
<dbReference type="KEGG" id="hsa:64760"/>
<dbReference type="MANE-Select" id="ENST00000289921.8">
    <property type="protein sequence ID" value="ENSP00000289921.6"/>
    <property type="RefSeq nucleotide sequence ID" value="NM_022749.7"/>
    <property type="RefSeq protein sequence ID" value="NP_073586.5"/>
</dbReference>
<dbReference type="UCSC" id="uc011kyx.3">
    <property type="organism name" value="human"/>
</dbReference>
<dbReference type="AGR" id="HGNC:16492"/>
<dbReference type="CTD" id="64760"/>
<dbReference type="DisGeNET" id="64760"/>
<dbReference type="GeneCards" id="FHIP2B"/>
<dbReference type="HGNC" id="HGNC:16492">
    <property type="gene designation" value="FHIP2B"/>
</dbReference>
<dbReference type="HPA" id="ENSG00000158863">
    <property type="expression patterns" value="Low tissue specificity"/>
</dbReference>
<dbReference type="MIM" id="620230">
    <property type="type" value="gene"/>
</dbReference>
<dbReference type="neXtProt" id="NX_Q86V87"/>
<dbReference type="OpenTargets" id="ENSG00000158863"/>
<dbReference type="VEuPathDB" id="HostDB:ENSG00000158863"/>
<dbReference type="eggNOG" id="KOG3695">
    <property type="taxonomic scope" value="Eukaryota"/>
</dbReference>
<dbReference type="GeneTree" id="ENSGT00950000182936"/>
<dbReference type="HOGENOM" id="CLU_023718_0_0_1"/>
<dbReference type="InParanoid" id="Q86V87"/>
<dbReference type="OMA" id="CDHLIME"/>
<dbReference type="PAN-GO" id="Q86V87">
    <property type="GO annotations" value="0 GO annotations based on evolutionary models"/>
</dbReference>
<dbReference type="PhylomeDB" id="Q86V87"/>
<dbReference type="TreeFam" id="TF313941"/>
<dbReference type="PathwayCommons" id="Q86V87"/>
<dbReference type="SignaLink" id="Q86V87"/>
<dbReference type="BioGRID-ORCS" id="64760">
    <property type="hits" value="17 hits in 1158 CRISPR screens"/>
</dbReference>
<dbReference type="GenomeRNAi" id="64760"/>
<dbReference type="Pharos" id="Q86V87">
    <property type="development level" value="Tbio"/>
</dbReference>
<dbReference type="PRO" id="PR:Q86V87"/>
<dbReference type="Proteomes" id="UP000005640">
    <property type="component" value="Chromosome 8"/>
</dbReference>
<dbReference type="RNAct" id="Q86V87">
    <property type="molecule type" value="protein"/>
</dbReference>
<dbReference type="Bgee" id="ENSG00000158863">
    <property type="expression patterns" value="Expressed in right lobe of thyroid gland and 149 other cell types or tissues"/>
</dbReference>
<dbReference type="ExpressionAtlas" id="Q86V87">
    <property type="expression patterns" value="baseline and differential"/>
</dbReference>
<dbReference type="InterPro" id="IPR019384">
    <property type="entry name" value="FHIP"/>
</dbReference>
<dbReference type="InterPro" id="IPR045669">
    <property type="entry name" value="FHIP_C"/>
</dbReference>
<dbReference type="InterPro" id="IPR045668">
    <property type="entry name" value="FHIP_KELAA_motif"/>
</dbReference>
<dbReference type="PANTHER" id="PTHR21705:SF9">
    <property type="entry name" value="FHF COMPLEX SUBUNIT HOOK-INTERACTING PROTEIN 2B"/>
    <property type="match status" value="1"/>
</dbReference>
<dbReference type="PANTHER" id="PTHR21705">
    <property type="entry name" value="RAI16 PROTEIN-RELATED"/>
    <property type="match status" value="1"/>
</dbReference>
<dbReference type="Pfam" id="PF19314">
    <property type="entry name" value="DUF5917"/>
    <property type="match status" value="1"/>
</dbReference>
<dbReference type="Pfam" id="PF19311">
    <property type="entry name" value="KELAA"/>
    <property type="match status" value="1"/>
</dbReference>
<dbReference type="Pfam" id="PF10257">
    <property type="entry name" value="RAI16-like"/>
    <property type="match status" value="1"/>
</dbReference>
<protein>
    <recommendedName>
        <fullName evidence="7">FHF complex subunit HOOK-interacting protein 2B</fullName>
        <shortName>FHIP2B</shortName>
    </recommendedName>
    <alternativeName>
        <fullName evidence="6">Retinoic acid-induced protein 16</fullName>
    </alternativeName>
</protein>
<gene>
    <name evidence="8" type="primary">FHIP2B</name>
    <name type="synonym">FAM160B2</name>
    <name evidence="6" type="synonym">RAI16</name>
    <name type="ORF">FP13191</name>
</gene>
<reference key="1">
    <citation type="journal article" date="2006" name="Nature">
        <title>DNA sequence and analysis of human chromosome 8.</title>
        <authorList>
            <person name="Nusbaum C."/>
            <person name="Mikkelsen T.S."/>
            <person name="Zody M.C."/>
            <person name="Asakawa S."/>
            <person name="Taudien S."/>
            <person name="Garber M."/>
            <person name="Kodira C.D."/>
            <person name="Schueler M.G."/>
            <person name="Shimizu A."/>
            <person name="Whittaker C.A."/>
            <person name="Chang J.L."/>
            <person name="Cuomo C.A."/>
            <person name="Dewar K."/>
            <person name="FitzGerald M.G."/>
            <person name="Yang X."/>
            <person name="Allen N.R."/>
            <person name="Anderson S."/>
            <person name="Asakawa T."/>
            <person name="Blechschmidt K."/>
            <person name="Bloom T."/>
            <person name="Borowsky M.L."/>
            <person name="Butler J."/>
            <person name="Cook A."/>
            <person name="Corum B."/>
            <person name="DeArellano K."/>
            <person name="DeCaprio D."/>
            <person name="Dooley K.T."/>
            <person name="Dorris L. III"/>
            <person name="Engels R."/>
            <person name="Gloeckner G."/>
            <person name="Hafez N."/>
            <person name="Hagopian D.S."/>
            <person name="Hall J.L."/>
            <person name="Ishikawa S.K."/>
            <person name="Jaffe D.B."/>
            <person name="Kamat A."/>
            <person name="Kudoh J."/>
            <person name="Lehmann R."/>
            <person name="Lokitsang T."/>
            <person name="Macdonald P."/>
            <person name="Major J.E."/>
            <person name="Matthews C.D."/>
            <person name="Mauceli E."/>
            <person name="Menzel U."/>
            <person name="Mihalev A.H."/>
            <person name="Minoshima S."/>
            <person name="Murayama Y."/>
            <person name="Naylor J.W."/>
            <person name="Nicol R."/>
            <person name="Nguyen C."/>
            <person name="O'Leary S.B."/>
            <person name="O'Neill K."/>
            <person name="Parker S.C.J."/>
            <person name="Polley A."/>
            <person name="Raymond C.K."/>
            <person name="Reichwald K."/>
            <person name="Rodriguez J."/>
            <person name="Sasaki T."/>
            <person name="Schilhabel M."/>
            <person name="Siddiqui R."/>
            <person name="Smith C.L."/>
            <person name="Sneddon T.P."/>
            <person name="Talamas J.A."/>
            <person name="Tenzin P."/>
            <person name="Topham K."/>
            <person name="Venkataraman V."/>
            <person name="Wen G."/>
            <person name="Yamazaki S."/>
            <person name="Young S.K."/>
            <person name="Zeng Q."/>
            <person name="Zimmer A.R."/>
            <person name="Rosenthal A."/>
            <person name="Birren B.W."/>
            <person name="Platzer M."/>
            <person name="Shimizu N."/>
            <person name="Lander E.S."/>
        </authorList>
    </citation>
    <scope>NUCLEOTIDE SEQUENCE [LARGE SCALE GENOMIC DNA]</scope>
</reference>
<reference key="2">
    <citation type="journal article" date="2004" name="Genome Res.">
        <title>The status, quality, and expansion of the NIH full-length cDNA project: the Mammalian Gene Collection (MGC).</title>
        <authorList>
            <consortium name="The MGC Project Team"/>
        </authorList>
    </citation>
    <scope>NUCLEOTIDE SEQUENCE [LARGE SCALE MRNA]</scope>
    <scope>VARIANT ALA-315</scope>
    <source>
        <tissue>Brain</tissue>
        <tissue>Lung</tissue>
        <tissue>Placenta</tissue>
    </source>
</reference>
<reference key="3">
    <citation type="journal article" date="2004" name="Proc. Natl. Acad. Sci. U.S.A.">
        <title>Large-scale cDNA transfection screening for genes related to cancer development and progression.</title>
        <authorList>
            <person name="Wan D."/>
            <person name="Gong Y."/>
            <person name="Qin W."/>
            <person name="Zhang P."/>
            <person name="Li J."/>
            <person name="Wei L."/>
            <person name="Zhou X."/>
            <person name="Li H."/>
            <person name="Qiu X."/>
            <person name="Zhong F."/>
            <person name="He L."/>
            <person name="Yu J."/>
            <person name="Yao G."/>
            <person name="Jiang H."/>
            <person name="Qian L."/>
            <person name="Yu Y."/>
            <person name="Shu H."/>
            <person name="Chen X."/>
            <person name="Xu H."/>
            <person name="Guo M."/>
            <person name="Pan Z."/>
            <person name="Chen Y."/>
            <person name="Ge C."/>
            <person name="Yang S."/>
            <person name="Gu J."/>
        </authorList>
    </citation>
    <scope>NUCLEOTIDE SEQUENCE [LARGE SCALE MRNA] OF 182-743</scope>
    <scope>VARIANT ALA-315</scope>
</reference>
<reference key="4">
    <citation type="journal article" date="2004" name="Nat. Genet.">
        <title>Complete sequencing and characterization of 21,243 full-length human cDNAs.</title>
        <authorList>
            <person name="Ota T."/>
            <person name="Suzuki Y."/>
            <person name="Nishikawa T."/>
            <person name="Otsuki T."/>
            <person name="Sugiyama T."/>
            <person name="Irie R."/>
            <person name="Wakamatsu A."/>
            <person name="Hayashi K."/>
            <person name="Sato H."/>
            <person name="Nagai K."/>
            <person name="Kimura K."/>
            <person name="Makita H."/>
            <person name="Sekine M."/>
            <person name="Obayashi M."/>
            <person name="Nishi T."/>
            <person name="Shibahara T."/>
            <person name="Tanaka T."/>
            <person name="Ishii S."/>
            <person name="Yamamoto J."/>
            <person name="Saito K."/>
            <person name="Kawai Y."/>
            <person name="Isono Y."/>
            <person name="Nakamura Y."/>
            <person name="Nagahari K."/>
            <person name="Murakami K."/>
            <person name="Yasuda T."/>
            <person name="Iwayanagi T."/>
            <person name="Wagatsuma M."/>
            <person name="Shiratori A."/>
            <person name="Sudo H."/>
            <person name="Hosoiri T."/>
            <person name="Kaku Y."/>
            <person name="Kodaira H."/>
            <person name="Kondo H."/>
            <person name="Sugawara M."/>
            <person name="Takahashi M."/>
            <person name="Kanda K."/>
            <person name="Yokoi T."/>
            <person name="Furuya T."/>
            <person name="Kikkawa E."/>
            <person name="Omura Y."/>
            <person name="Abe K."/>
            <person name="Kamihara K."/>
            <person name="Katsuta N."/>
            <person name="Sato K."/>
            <person name="Tanikawa M."/>
            <person name="Yamazaki M."/>
            <person name="Ninomiya K."/>
            <person name="Ishibashi T."/>
            <person name="Yamashita H."/>
            <person name="Murakawa K."/>
            <person name="Fujimori K."/>
            <person name="Tanai H."/>
            <person name="Kimata M."/>
            <person name="Watanabe M."/>
            <person name="Hiraoka S."/>
            <person name="Chiba Y."/>
            <person name="Ishida S."/>
            <person name="Ono Y."/>
            <person name="Takiguchi S."/>
            <person name="Watanabe S."/>
            <person name="Yosida M."/>
            <person name="Hotuta T."/>
            <person name="Kusano J."/>
            <person name="Kanehori K."/>
            <person name="Takahashi-Fujii A."/>
            <person name="Hara H."/>
            <person name="Tanase T.-O."/>
            <person name="Nomura Y."/>
            <person name="Togiya S."/>
            <person name="Komai F."/>
            <person name="Hara R."/>
            <person name="Takeuchi K."/>
            <person name="Arita M."/>
            <person name="Imose N."/>
            <person name="Musashino K."/>
            <person name="Yuuki H."/>
            <person name="Oshima A."/>
            <person name="Sasaki N."/>
            <person name="Aotsuka S."/>
            <person name="Yoshikawa Y."/>
            <person name="Matsunawa H."/>
            <person name="Ichihara T."/>
            <person name="Shiohata N."/>
            <person name="Sano S."/>
            <person name="Moriya S."/>
            <person name="Momiyama H."/>
            <person name="Satoh N."/>
            <person name="Takami S."/>
            <person name="Terashima Y."/>
            <person name="Suzuki O."/>
            <person name="Nakagawa S."/>
            <person name="Senoh A."/>
            <person name="Mizoguchi H."/>
            <person name="Goto Y."/>
            <person name="Shimizu F."/>
            <person name="Wakebe H."/>
            <person name="Hishigaki H."/>
            <person name="Watanabe T."/>
            <person name="Sugiyama A."/>
            <person name="Takemoto M."/>
            <person name="Kawakami B."/>
            <person name="Yamazaki M."/>
            <person name="Watanabe K."/>
            <person name="Kumagai A."/>
            <person name="Itakura S."/>
            <person name="Fukuzumi Y."/>
            <person name="Fujimori Y."/>
            <person name="Komiyama M."/>
            <person name="Tashiro H."/>
            <person name="Tanigami A."/>
            <person name="Fujiwara T."/>
            <person name="Ono T."/>
            <person name="Yamada K."/>
            <person name="Fujii Y."/>
            <person name="Ozaki K."/>
            <person name="Hirao M."/>
            <person name="Ohmori Y."/>
            <person name="Kawabata A."/>
            <person name="Hikiji T."/>
            <person name="Kobatake N."/>
            <person name="Inagaki H."/>
            <person name="Ikema Y."/>
            <person name="Okamoto S."/>
            <person name="Okitani R."/>
            <person name="Kawakami T."/>
            <person name="Noguchi S."/>
            <person name="Itoh T."/>
            <person name="Shigeta K."/>
            <person name="Senba T."/>
            <person name="Matsumura K."/>
            <person name="Nakajima Y."/>
            <person name="Mizuno T."/>
            <person name="Morinaga M."/>
            <person name="Sasaki M."/>
            <person name="Togashi T."/>
            <person name="Oyama M."/>
            <person name="Hata H."/>
            <person name="Watanabe M."/>
            <person name="Komatsu T."/>
            <person name="Mizushima-Sugano J."/>
            <person name="Satoh T."/>
            <person name="Shirai Y."/>
            <person name="Takahashi Y."/>
            <person name="Nakagawa K."/>
            <person name="Okumura K."/>
            <person name="Nagase T."/>
            <person name="Nomura N."/>
            <person name="Kikuchi H."/>
            <person name="Masuho Y."/>
            <person name="Yamashita R."/>
            <person name="Nakai K."/>
            <person name="Yada T."/>
            <person name="Nakamura Y."/>
            <person name="Ohara O."/>
            <person name="Isogai T."/>
            <person name="Sugano S."/>
        </authorList>
    </citation>
    <scope>NUCLEOTIDE SEQUENCE [LARGE SCALE MRNA] OF 298-743</scope>
    <source>
        <tissue>Hepatoma</tissue>
        <tissue>Synovium</tissue>
        <tissue>Tongue</tissue>
    </source>
</reference>
<reference key="5">
    <citation type="journal article" date="2012" name="Carcinogenesis">
        <title>Retinoic acid induced 16 enhances tumorigenesis and serves as a novel tumor marker for hepatocellular carcinoma.</title>
        <authorList>
            <person name="Wang W."/>
            <person name="Zhao L.J."/>
            <person name="Yang Y."/>
            <person name="Wang R.Y."/>
            <person name="Ren H."/>
            <person name="Zhao P."/>
            <person name="Zhou W.P."/>
            <person name="Qi Z.T."/>
        </authorList>
    </citation>
    <scope>FUNCTION</scope>
    <scope>TISSUE SPECIFICITY</scope>
</reference>